<proteinExistence type="inferred from homology"/>
<reference key="1">
    <citation type="journal article" date="2003" name="Nucleic Acids Res.">
        <title>What's in the genome of a filamentous fungus? Analysis of the Neurospora genome sequence.</title>
        <authorList>
            <person name="Mannhaupt G."/>
            <person name="Montrone C."/>
            <person name="Haase D."/>
            <person name="Mewes H.-W."/>
            <person name="Aign V."/>
            <person name="Hoheisel J.D."/>
            <person name="Fartmann B."/>
            <person name="Nyakatura G."/>
            <person name="Kempken F."/>
            <person name="Maier J."/>
            <person name="Schulte U."/>
        </authorList>
    </citation>
    <scope>NUCLEOTIDE SEQUENCE [LARGE SCALE GENOMIC DNA]</scope>
    <source>
        <strain>ATCC 24698 / 74-OR23-1A / CBS 708.71 / DSM 1257 / FGSC 987</strain>
    </source>
</reference>
<reference key="2">
    <citation type="journal article" date="2003" name="Nature">
        <title>The genome sequence of the filamentous fungus Neurospora crassa.</title>
        <authorList>
            <person name="Galagan J.E."/>
            <person name="Calvo S.E."/>
            <person name="Borkovich K.A."/>
            <person name="Selker E.U."/>
            <person name="Read N.D."/>
            <person name="Jaffe D.B."/>
            <person name="FitzHugh W."/>
            <person name="Ma L.-J."/>
            <person name="Smirnov S."/>
            <person name="Purcell S."/>
            <person name="Rehman B."/>
            <person name="Elkins T."/>
            <person name="Engels R."/>
            <person name="Wang S."/>
            <person name="Nielsen C.B."/>
            <person name="Butler J."/>
            <person name="Endrizzi M."/>
            <person name="Qui D."/>
            <person name="Ianakiev P."/>
            <person name="Bell-Pedersen D."/>
            <person name="Nelson M.A."/>
            <person name="Werner-Washburne M."/>
            <person name="Selitrennikoff C.P."/>
            <person name="Kinsey J.A."/>
            <person name="Braun E.L."/>
            <person name="Zelter A."/>
            <person name="Schulte U."/>
            <person name="Kothe G.O."/>
            <person name="Jedd G."/>
            <person name="Mewes H.-W."/>
            <person name="Staben C."/>
            <person name="Marcotte E."/>
            <person name="Greenberg D."/>
            <person name="Roy A."/>
            <person name="Foley K."/>
            <person name="Naylor J."/>
            <person name="Stange-Thomann N."/>
            <person name="Barrett R."/>
            <person name="Gnerre S."/>
            <person name="Kamal M."/>
            <person name="Kamvysselis M."/>
            <person name="Mauceli E.W."/>
            <person name="Bielke C."/>
            <person name="Rudd S."/>
            <person name="Frishman D."/>
            <person name="Krystofova S."/>
            <person name="Rasmussen C."/>
            <person name="Metzenberg R.L."/>
            <person name="Perkins D.D."/>
            <person name="Kroken S."/>
            <person name="Cogoni C."/>
            <person name="Macino G."/>
            <person name="Catcheside D.E.A."/>
            <person name="Li W."/>
            <person name="Pratt R.J."/>
            <person name="Osmani S.A."/>
            <person name="DeSouza C.P.C."/>
            <person name="Glass N.L."/>
            <person name="Orbach M.J."/>
            <person name="Berglund J.A."/>
            <person name="Voelker R."/>
            <person name="Yarden O."/>
            <person name="Plamann M."/>
            <person name="Seiler S."/>
            <person name="Dunlap J.C."/>
            <person name="Radford A."/>
            <person name="Aramayo R."/>
            <person name="Natvig D.O."/>
            <person name="Alex L.A."/>
            <person name="Mannhaupt G."/>
            <person name="Ebbole D.J."/>
            <person name="Freitag M."/>
            <person name="Paulsen I."/>
            <person name="Sachs M.S."/>
            <person name="Lander E.S."/>
            <person name="Nusbaum C."/>
            <person name="Birren B.W."/>
        </authorList>
    </citation>
    <scope>NUCLEOTIDE SEQUENCE [LARGE SCALE GENOMIC DNA]</scope>
    <source>
        <strain>ATCC 24698 / 74-OR23-1A / CBS 708.71 / DSM 1257 / FGSC 987</strain>
    </source>
</reference>
<protein>
    <recommendedName>
        <fullName>Protein transport protein SEC61 subunit alpha</fullName>
    </recommendedName>
</protein>
<organism>
    <name type="scientific">Neurospora crassa (strain ATCC 24698 / 74-OR23-1A / CBS 708.71 / DSM 1257 / FGSC 987)</name>
    <dbReference type="NCBI Taxonomy" id="367110"/>
    <lineage>
        <taxon>Eukaryota</taxon>
        <taxon>Fungi</taxon>
        <taxon>Dikarya</taxon>
        <taxon>Ascomycota</taxon>
        <taxon>Pezizomycotina</taxon>
        <taxon>Sordariomycetes</taxon>
        <taxon>Sordariomycetidae</taxon>
        <taxon>Sordariales</taxon>
        <taxon>Sordariaceae</taxon>
        <taxon>Neurospora</taxon>
    </lineage>
</organism>
<feature type="chain" id="PRO_0000131786" description="Protein transport protein SEC61 subunit alpha">
    <location>
        <begin position="1"/>
        <end position="476"/>
    </location>
</feature>
<feature type="topological domain" description="Cytoplasmic" evidence="2">
    <location>
        <begin position="1"/>
        <end position="33"/>
    </location>
</feature>
<feature type="transmembrane region" description="Helical" evidence="2">
    <location>
        <begin position="34"/>
        <end position="54"/>
    </location>
</feature>
<feature type="topological domain" description="Lumenal" evidence="2">
    <location>
        <begin position="55"/>
        <end position="76"/>
    </location>
</feature>
<feature type="transmembrane region" description="Helical" evidence="2">
    <location>
        <begin position="77"/>
        <end position="97"/>
    </location>
</feature>
<feature type="topological domain" description="Cytoplasmic" evidence="2">
    <location>
        <begin position="98"/>
        <end position="119"/>
    </location>
</feature>
<feature type="transmembrane region" description="Helical" evidence="2">
    <location>
        <begin position="120"/>
        <end position="140"/>
    </location>
</feature>
<feature type="topological domain" description="Lumenal" evidence="2">
    <location>
        <begin position="141"/>
        <end position="146"/>
    </location>
</feature>
<feature type="transmembrane region" description="Helical" evidence="2">
    <location>
        <begin position="147"/>
        <end position="167"/>
    </location>
</feature>
<feature type="topological domain" description="Cytoplasmic" evidence="2">
    <location>
        <begin position="168"/>
        <end position="246"/>
    </location>
</feature>
<feature type="transmembrane region" description="Helical" evidence="2">
    <location>
        <begin position="247"/>
        <end position="267"/>
    </location>
</feature>
<feature type="topological domain" description="Lumenal" evidence="2">
    <location>
        <begin position="268"/>
        <end position="361"/>
    </location>
</feature>
<feature type="transmembrane region" description="Helical" evidence="2">
    <location>
        <begin position="362"/>
        <end position="382"/>
    </location>
</feature>
<feature type="topological domain" description="Cytoplasmic" evidence="2">
    <location>
        <begin position="383"/>
        <end position="415"/>
    </location>
</feature>
<feature type="transmembrane region" description="Helical" evidence="2">
    <location>
        <begin position="416"/>
        <end position="434"/>
    </location>
</feature>
<feature type="topological domain" description="Lumenal" evidence="2">
    <location>
        <begin position="435"/>
        <end position="440"/>
    </location>
</feature>
<feature type="transmembrane region" description="Helical" evidence="2">
    <location>
        <begin position="441"/>
        <end position="458"/>
    </location>
</feature>
<feature type="topological domain" description="Cytoplasmic" evidence="2">
    <location>
        <begin position="459"/>
        <end position="476"/>
    </location>
</feature>
<name>SC61A_NEUCR</name>
<sequence length="476" mass="52312">MSSLRFLDLVKPFVPFLPEVQQPETKIPFNQKLMWTGLTLLIFLVMSQMPLYGIVSSDTSDPLYWLRMMMASNRGTLMELGITPIISSGMVFQLLAGTHMIDVNLDLKADRELYQTAQKLFAVILSIGTATVYVFTGLYGPPSDLGAGIVFLLILQLVVAGMIVILLDELLQKGYGLGSGISLFIATNICESIMWKAFSPTSINTGRGPEYEGAVIALFHLLMTWDNKQRALYEAFYRQNLPNIMNLLATLVVFAAVIYLQGFRVEIPVKSSRQRGARGSYPIRLFYTSNMPIMLQSALSSNVFLISQMLYSRFSENLLVRLFGVWEAKEGTAQLSAVSGLVYYMSPPLNFKDALLDPIHTAVYIAYMLTACAVFSKTWIEVSGSSPRDVAKQLKDQGLVMAGHREQSMYKELKRIIPTAAAFGGACIGALSVASDLMGALGSGTGTLLAVTIIYGYFEIAAKEGDLQGMKGMIMG</sequence>
<keyword id="KW-0256">Endoplasmic reticulum</keyword>
<keyword id="KW-0472">Membrane</keyword>
<keyword id="KW-0653">Protein transport</keyword>
<keyword id="KW-1185">Reference proteome</keyword>
<keyword id="KW-0811">Translocation</keyword>
<keyword id="KW-0812">Transmembrane</keyword>
<keyword id="KW-1133">Transmembrane helix</keyword>
<keyword id="KW-0813">Transport</keyword>
<accession>Q870W0</accession>
<accession>Q1K696</accession>
<gene>
    <name type="primary">sec-61</name>
    <name type="ORF">B14A21.120</name>
    <name type="ORF">NCU08897</name>
</gene>
<dbReference type="EMBL" id="BX294091">
    <property type="protein sequence ID" value="CAD71226.1"/>
    <property type="molecule type" value="Genomic_DNA"/>
</dbReference>
<dbReference type="EMBL" id="CM002240">
    <property type="protein sequence ID" value="EAA29599.1"/>
    <property type="molecule type" value="Genomic_DNA"/>
</dbReference>
<dbReference type="RefSeq" id="XP_958835.1">
    <property type="nucleotide sequence ID" value="XM_953742.3"/>
</dbReference>
<dbReference type="SMR" id="Q870W0"/>
<dbReference type="FunCoup" id="Q870W0">
    <property type="interactions" value="889"/>
</dbReference>
<dbReference type="STRING" id="367110.Q870W0"/>
<dbReference type="PaxDb" id="5141-EFNCRP00000008819"/>
<dbReference type="EnsemblFungi" id="EAA29599">
    <property type="protein sequence ID" value="EAA29599"/>
    <property type="gene ID" value="NCU08897"/>
</dbReference>
<dbReference type="GeneID" id="3874982"/>
<dbReference type="KEGG" id="ncr:NCU08897"/>
<dbReference type="VEuPathDB" id="FungiDB:NCU08897"/>
<dbReference type="HOGENOM" id="CLU_031763_2_1_1"/>
<dbReference type="InParanoid" id="Q870W0"/>
<dbReference type="OMA" id="PMMRQMF"/>
<dbReference type="OrthoDB" id="420669at2759"/>
<dbReference type="Proteomes" id="UP000001805">
    <property type="component" value="Chromosome 2, Linkage Group V"/>
</dbReference>
<dbReference type="GO" id="GO:0000324">
    <property type="term" value="C:fungal-type vacuole"/>
    <property type="evidence" value="ECO:0007669"/>
    <property type="project" value="EnsemblFungi"/>
</dbReference>
<dbReference type="GO" id="GO:0005784">
    <property type="term" value="C:Sec61 translocon complex"/>
    <property type="evidence" value="ECO:0000318"/>
    <property type="project" value="GO_Central"/>
</dbReference>
<dbReference type="GO" id="GO:1904680">
    <property type="term" value="F:peptide transmembrane transporter activity"/>
    <property type="evidence" value="ECO:0007669"/>
    <property type="project" value="EnsemblFungi"/>
</dbReference>
<dbReference type="GO" id="GO:0008320">
    <property type="term" value="F:protein transmembrane transporter activity"/>
    <property type="evidence" value="ECO:0000318"/>
    <property type="project" value="GO_Central"/>
</dbReference>
<dbReference type="GO" id="GO:0015450">
    <property type="term" value="F:protein-transporting ATPase activity"/>
    <property type="evidence" value="ECO:0007669"/>
    <property type="project" value="EnsemblFungi"/>
</dbReference>
<dbReference type="GO" id="GO:0043022">
    <property type="term" value="F:ribosome binding"/>
    <property type="evidence" value="ECO:0000318"/>
    <property type="project" value="GO_Central"/>
</dbReference>
<dbReference type="GO" id="GO:0005048">
    <property type="term" value="F:signal sequence binding"/>
    <property type="evidence" value="ECO:0000318"/>
    <property type="project" value="GO_Central"/>
</dbReference>
<dbReference type="GO" id="GO:0070843">
    <property type="term" value="P:misfolded protein transport"/>
    <property type="evidence" value="ECO:0007669"/>
    <property type="project" value="EnsemblFungi"/>
</dbReference>
<dbReference type="GO" id="GO:0031204">
    <property type="term" value="P:post-translational protein targeting to membrane, translocation"/>
    <property type="evidence" value="ECO:0000318"/>
    <property type="project" value="GO_Central"/>
</dbReference>
<dbReference type="GO" id="GO:0030970">
    <property type="term" value="P:retrograde protein transport, ER to cytosol"/>
    <property type="evidence" value="ECO:0007669"/>
    <property type="project" value="EnsemblFungi"/>
</dbReference>
<dbReference type="GO" id="GO:0006616">
    <property type="term" value="P:SRP-dependent cotranslational protein targeting to membrane, translocation"/>
    <property type="evidence" value="ECO:0000318"/>
    <property type="project" value="GO_Central"/>
</dbReference>
<dbReference type="FunFam" id="1.10.3370.10:FF:000002">
    <property type="entry name" value="Transport Sec61 subunit alpha isoform 2"/>
    <property type="match status" value="1"/>
</dbReference>
<dbReference type="Gene3D" id="1.10.3370.10">
    <property type="entry name" value="SecY subunit domain"/>
    <property type="match status" value="1"/>
</dbReference>
<dbReference type="InterPro" id="IPR002208">
    <property type="entry name" value="SecY/SEC61-alpha"/>
</dbReference>
<dbReference type="InterPro" id="IPR030659">
    <property type="entry name" value="SecY_CS"/>
</dbReference>
<dbReference type="InterPro" id="IPR023201">
    <property type="entry name" value="SecY_dom_sf"/>
</dbReference>
<dbReference type="InterPro" id="IPR019561">
    <property type="entry name" value="Translocon_Sec61/SecY_plug_dom"/>
</dbReference>
<dbReference type="NCBIfam" id="TIGR00967">
    <property type="entry name" value="3a0501s007"/>
    <property type="match status" value="1"/>
</dbReference>
<dbReference type="NCBIfam" id="NF006341">
    <property type="entry name" value="PRK08568.1-5"/>
    <property type="match status" value="1"/>
</dbReference>
<dbReference type="PANTHER" id="PTHR10906">
    <property type="entry name" value="SECY/SEC61-ALPHA FAMILY MEMBER"/>
    <property type="match status" value="1"/>
</dbReference>
<dbReference type="Pfam" id="PF10559">
    <property type="entry name" value="Plug_translocon"/>
    <property type="match status" value="1"/>
</dbReference>
<dbReference type="Pfam" id="PF00344">
    <property type="entry name" value="SecY"/>
    <property type="match status" value="1"/>
</dbReference>
<dbReference type="PIRSF" id="PIRSF004557">
    <property type="entry name" value="SecY"/>
    <property type="match status" value="1"/>
</dbReference>
<dbReference type="SUPFAM" id="SSF103491">
    <property type="entry name" value="Preprotein translocase SecY subunit"/>
    <property type="match status" value="1"/>
</dbReference>
<dbReference type="PROSITE" id="PS00755">
    <property type="entry name" value="SECY_1"/>
    <property type="match status" value="1"/>
</dbReference>
<dbReference type="PROSITE" id="PS00756">
    <property type="entry name" value="SECY_2"/>
    <property type="match status" value="1"/>
</dbReference>
<evidence type="ECO:0000250" key="1"/>
<evidence type="ECO:0000255" key="2"/>
<evidence type="ECO:0000305" key="3"/>
<comment type="function">
    <text evidence="1">Appears to play a crucial role in the insertion of secretory and membrane polypeptides into the ER. It is required for assembly of membrane and secretory proteins and is essential for cell growth. It interacts with other membrane proteins required for protein translocation. Upon binding to SEC62/63 complex, secretory precursor polypeptides may engage SEC61 to begin membrane penetration event. A cycle of assembly and disassembly of SEC62/63 from SEC61 may govern the activity of the translocase (By similarity).</text>
</comment>
<comment type="subunit">
    <text evidence="1">Heterotrimeric complex composed of SEC61-alpha, SEC61-beta and SEC61-gamma.</text>
</comment>
<comment type="subcellular location">
    <subcellularLocation>
        <location>Endoplasmic reticulum membrane</location>
        <topology>Multi-pass membrane protein</topology>
    </subcellularLocation>
</comment>
<comment type="similarity">
    <text evidence="3">Belongs to the SecY/SEC61-alpha family.</text>
</comment>